<feature type="chain" id="PRO_0000065714" description="UBA domain-containing protein 3">
    <location>
        <begin position="1"/>
        <end position="601"/>
    </location>
</feature>
<feature type="domain" description="Arf-GAP" evidence="2">
    <location>
        <begin position="7"/>
        <end position="129"/>
    </location>
</feature>
<feature type="domain" description="UBA" evidence="1">
    <location>
        <begin position="157"/>
        <end position="197"/>
    </location>
</feature>
<feature type="region of interest" description="Disordered" evidence="3">
    <location>
        <begin position="123"/>
        <end position="158"/>
    </location>
</feature>
<feature type="region of interest" description="Disordered" evidence="3">
    <location>
        <begin position="289"/>
        <end position="310"/>
    </location>
</feature>
<feature type="compositionally biased region" description="Low complexity" evidence="3">
    <location>
        <begin position="139"/>
        <end position="156"/>
    </location>
</feature>
<sequence length="601" mass="65542">MSGRRNETAIRELVQSVSGNNLCADCSTRGVQWASWNLGIFLCLRCATIHRKLGTHVSKVKSISLDEWSNDQIEKMKHWGNINANRYWNPNPLSHPLPTNALSDEHVMEKYIRDKYERKLFLDENHSTNSKPPSLPPRTKSSSQSSPMASTSTSKSRYADSLSTLHDMGFSDDSVNTHALEETNGDVTRAIEKIVQHGSSKPQKPSTLTSTKSTIKLVSARLKKRNKNLSVHFEDGTKPGDAYEVTGDTRAASPTLNPFEQMMAMTNQGMSVSPGVETTSSPFFTAPVEPNQPLQPLRPSMTGPVPSSMGSEATLNMPSTYGIDSNLYTNSNSSSIVQNPLQPARTGPAAINYNYTTNYSVSSPSVTNPFFDVGSSTQNASLMGSTGYPSSANNVYYENSYQGVGTSMSDNYQLPDMSKLSLNEQPAAPSNSNSQYMNTSMPTLDSTNMYGQSNQDPYSMSNGVYGSNYSAQPSTMQMQATGIAPPQPNMSMQMPMSMQSTGYQMPMENTWVDYNGMSQQGNGMQPATMNYSNSMGYDTNVPADNGYYQQGYGNVMMPPDASYTGTGSYVQPMNQPSGGMGAPADSSKADSYIQRIMQGKQ</sequence>
<name>UCP3_SCHPO</name>
<reference key="1">
    <citation type="journal article" date="2002" name="Nature">
        <title>The genome sequence of Schizosaccharomyces pombe.</title>
        <authorList>
            <person name="Wood V."/>
            <person name="Gwilliam R."/>
            <person name="Rajandream M.A."/>
            <person name="Lyne M.H."/>
            <person name="Lyne R."/>
            <person name="Stewart A."/>
            <person name="Sgouros J.G."/>
            <person name="Peat N."/>
            <person name="Hayles J."/>
            <person name="Baker S.G."/>
            <person name="Basham D."/>
            <person name="Bowman S."/>
            <person name="Brooks K."/>
            <person name="Brown D."/>
            <person name="Brown S."/>
            <person name="Chillingworth T."/>
            <person name="Churcher C.M."/>
            <person name="Collins M."/>
            <person name="Connor R."/>
            <person name="Cronin A."/>
            <person name="Davis P."/>
            <person name="Feltwell T."/>
            <person name="Fraser A."/>
            <person name="Gentles S."/>
            <person name="Goble A."/>
            <person name="Hamlin N."/>
            <person name="Harris D.E."/>
            <person name="Hidalgo J."/>
            <person name="Hodgson G."/>
            <person name="Holroyd S."/>
            <person name="Hornsby T."/>
            <person name="Howarth S."/>
            <person name="Huckle E.J."/>
            <person name="Hunt S."/>
            <person name="Jagels K."/>
            <person name="James K.D."/>
            <person name="Jones L."/>
            <person name="Jones M."/>
            <person name="Leather S."/>
            <person name="McDonald S."/>
            <person name="McLean J."/>
            <person name="Mooney P."/>
            <person name="Moule S."/>
            <person name="Mungall K.L."/>
            <person name="Murphy L.D."/>
            <person name="Niblett D."/>
            <person name="Odell C."/>
            <person name="Oliver K."/>
            <person name="O'Neil S."/>
            <person name="Pearson D."/>
            <person name="Quail M.A."/>
            <person name="Rabbinowitsch E."/>
            <person name="Rutherford K.M."/>
            <person name="Rutter S."/>
            <person name="Saunders D."/>
            <person name="Seeger K."/>
            <person name="Sharp S."/>
            <person name="Skelton J."/>
            <person name="Simmonds M.N."/>
            <person name="Squares R."/>
            <person name="Squares S."/>
            <person name="Stevens K."/>
            <person name="Taylor K."/>
            <person name="Taylor R.G."/>
            <person name="Tivey A."/>
            <person name="Walsh S.V."/>
            <person name="Warren T."/>
            <person name="Whitehead S."/>
            <person name="Woodward J.R."/>
            <person name="Volckaert G."/>
            <person name="Aert R."/>
            <person name="Robben J."/>
            <person name="Grymonprez B."/>
            <person name="Weltjens I."/>
            <person name="Vanstreels E."/>
            <person name="Rieger M."/>
            <person name="Schaefer M."/>
            <person name="Mueller-Auer S."/>
            <person name="Gabel C."/>
            <person name="Fuchs M."/>
            <person name="Duesterhoeft A."/>
            <person name="Fritzc C."/>
            <person name="Holzer E."/>
            <person name="Moestl D."/>
            <person name="Hilbert H."/>
            <person name="Borzym K."/>
            <person name="Langer I."/>
            <person name="Beck A."/>
            <person name="Lehrach H."/>
            <person name="Reinhardt R."/>
            <person name="Pohl T.M."/>
            <person name="Eger P."/>
            <person name="Zimmermann W."/>
            <person name="Wedler H."/>
            <person name="Wambutt R."/>
            <person name="Purnelle B."/>
            <person name="Goffeau A."/>
            <person name="Cadieu E."/>
            <person name="Dreano S."/>
            <person name="Gloux S."/>
            <person name="Lelaure V."/>
            <person name="Mottier S."/>
            <person name="Galibert F."/>
            <person name="Aves S.J."/>
            <person name="Xiang Z."/>
            <person name="Hunt C."/>
            <person name="Moore K."/>
            <person name="Hurst S.M."/>
            <person name="Lucas M."/>
            <person name="Rochet M."/>
            <person name="Gaillardin C."/>
            <person name="Tallada V.A."/>
            <person name="Garzon A."/>
            <person name="Thode G."/>
            <person name="Daga R.R."/>
            <person name="Cruzado L."/>
            <person name="Jimenez J."/>
            <person name="Sanchez M."/>
            <person name="del Rey F."/>
            <person name="Benito J."/>
            <person name="Dominguez A."/>
            <person name="Revuelta J.L."/>
            <person name="Moreno S."/>
            <person name="Armstrong J."/>
            <person name="Forsburg S.L."/>
            <person name="Cerutti L."/>
            <person name="Lowe T."/>
            <person name="McCombie W.R."/>
            <person name="Paulsen I."/>
            <person name="Potashkin J."/>
            <person name="Shpakovski G.V."/>
            <person name="Ussery D."/>
            <person name="Barrell B.G."/>
            <person name="Nurse P."/>
        </authorList>
    </citation>
    <scope>NUCLEOTIDE SEQUENCE [LARGE SCALE GENOMIC DNA]</scope>
    <source>
        <strain>972 / ATCC 24843</strain>
    </source>
</reference>
<reference key="2">
    <citation type="journal article" date="2001" name="Nat. Cell Biol.">
        <title>Proteins containing the UBA domain are able to bind to multi-ubiquitin chains.</title>
        <authorList>
            <person name="Wilkinson C.R.M."/>
            <person name="Seeger M."/>
            <person name="Hartmann-Petersen R."/>
            <person name="Stone M."/>
            <person name="Wallace M."/>
            <person name="Semple C."/>
            <person name="Gordon C."/>
        </authorList>
    </citation>
    <scope>IDENTIFICATION</scope>
</reference>
<organism>
    <name type="scientific">Schizosaccharomyces pombe (strain 972 / ATCC 24843)</name>
    <name type="common">Fission yeast</name>
    <dbReference type="NCBI Taxonomy" id="284812"/>
    <lineage>
        <taxon>Eukaryota</taxon>
        <taxon>Fungi</taxon>
        <taxon>Dikarya</taxon>
        <taxon>Ascomycota</taxon>
        <taxon>Taphrinomycotina</taxon>
        <taxon>Schizosaccharomycetes</taxon>
        <taxon>Schizosaccharomycetales</taxon>
        <taxon>Schizosaccharomycetaceae</taxon>
        <taxon>Schizosaccharomyces</taxon>
    </lineage>
</organism>
<evidence type="ECO:0000255" key="1">
    <source>
        <dbReference type="PROSITE-ProRule" id="PRU00212"/>
    </source>
</evidence>
<evidence type="ECO:0000255" key="2">
    <source>
        <dbReference type="PROSITE-ProRule" id="PRU00288"/>
    </source>
</evidence>
<evidence type="ECO:0000256" key="3">
    <source>
        <dbReference type="SAM" id="MobiDB-lite"/>
    </source>
</evidence>
<proteinExistence type="predicted"/>
<keyword id="KW-1185">Reference proteome</keyword>
<gene>
    <name type="primary">ucp3</name>
    <name type="synonym">soc2</name>
    <name type="ORF">SPBC21D10.05c</name>
</gene>
<protein>
    <recommendedName>
        <fullName>UBA domain-containing protein 3</fullName>
    </recommendedName>
</protein>
<accession>O74345</accession>
<dbReference type="EMBL" id="CU329671">
    <property type="protein sequence ID" value="CAA20761.1"/>
    <property type="molecule type" value="Genomic_DNA"/>
</dbReference>
<dbReference type="PIR" id="T11677">
    <property type="entry name" value="T11677"/>
</dbReference>
<dbReference type="RefSeq" id="NP_596008.1">
    <property type="nucleotide sequence ID" value="NM_001021916.2"/>
</dbReference>
<dbReference type="SMR" id="O74345"/>
<dbReference type="BioGRID" id="277232">
    <property type="interactions" value="3"/>
</dbReference>
<dbReference type="FunCoup" id="O74345">
    <property type="interactions" value="419"/>
</dbReference>
<dbReference type="STRING" id="284812.O74345"/>
<dbReference type="iPTMnet" id="O74345"/>
<dbReference type="PaxDb" id="4896-SPBC21D10.05c.1"/>
<dbReference type="EnsemblFungi" id="SPBC21D10.05c.1">
    <property type="protein sequence ID" value="SPBC21D10.05c.1:pep"/>
    <property type="gene ID" value="SPBC21D10.05c"/>
</dbReference>
<dbReference type="GeneID" id="2540709"/>
<dbReference type="KEGG" id="spo:2540709"/>
<dbReference type="PomBase" id="SPBC21D10.05c">
    <property type="gene designation" value="ucp3"/>
</dbReference>
<dbReference type="VEuPathDB" id="FungiDB:SPBC21D10.05c"/>
<dbReference type="eggNOG" id="KOG0703">
    <property type="taxonomic scope" value="Eukaryota"/>
</dbReference>
<dbReference type="HOGENOM" id="CLU_421007_0_0_1"/>
<dbReference type="InParanoid" id="O74345"/>
<dbReference type="OMA" id="FEQMMAM"/>
<dbReference type="PhylomeDB" id="O74345"/>
<dbReference type="PRO" id="PR:O74345"/>
<dbReference type="Proteomes" id="UP000002485">
    <property type="component" value="Chromosome II"/>
</dbReference>
<dbReference type="GO" id="GO:0030479">
    <property type="term" value="C:actin cortical patch"/>
    <property type="evidence" value="ECO:0000266"/>
    <property type="project" value="PomBase"/>
</dbReference>
<dbReference type="GO" id="GO:0051285">
    <property type="term" value="C:cell cortex of cell tip"/>
    <property type="evidence" value="ECO:0000269"/>
    <property type="project" value="PomBase"/>
</dbReference>
<dbReference type="GO" id="GO:0032153">
    <property type="term" value="C:cell division site"/>
    <property type="evidence" value="ECO:0007005"/>
    <property type="project" value="PomBase"/>
</dbReference>
<dbReference type="GO" id="GO:0071944">
    <property type="term" value="C:cell periphery"/>
    <property type="evidence" value="ECO:0000314"/>
    <property type="project" value="PomBase"/>
</dbReference>
<dbReference type="GO" id="GO:0051286">
    <property type="term" value="C:cell tip"/>
    <property type="evidence" value="ECO:0007005"/>
    <property type="project" value="PomBase"/>
</dbReference>
<dbReference type="GO" id="GO:0005737">
    <property type="term" value="C:cytoplasm"/>
    <property type="evidence" value="ECO:0000318"/>
    <property type="project" value="GO_Central"/>
</dbReference>
<dbReference type="GO" id="GO:0005829">
    <property type="term" value="C:cytosol"/>
    <property type="evidence" value="ECO:0007005"/>
    <property type="project" value="PomBase"/>
</dbReference>
<dbReference type="GO" id="GO:0005096">
    <property type="term" value="F:GTPase activator activity"/>
    <property type="evidence" value="ECO:0000318"/>
    <property type="project" value="GO_Central"/>
</dbReference>
<dbReference type="GO" id="GO:0031593">
    <property type="term" value="F:polyubiquitin modification-dependent protein binding"/>
    <property type="evidence" value="ECO:0000304"/>
    <property type="project" value="PomBase"/>
</dbReference>
<dbReference type="GO" id="GO:0051523">
    <property type="term" value="P:cell growth mode switching, monopolar to bipolar"/>
    <property type="evidence" value="ECO:0000315"/>
    <property type="project" value="PomBase"/>
</dbReference>
<dbReference type="GO" id="GO:0006897">
    <property type="term" value="P:endocytosis"/>
    <property type="evidence" value="ECO:0000266"/>
    <property type="project" value="PomBase"/>
</dbReference>
<dbReference type="CDD" id="cd08204">
    <property type="entry name" value="ArfGap"/>
    <property type="match status" value="1"/>
</dbReference>
<dbReference type="FunFam" id="1.10.220.150:FF:000026">
    <property type="entry name" value="GTPase activating protein for Arf, putative"/>
    <property type="match status" value="1"/>
</dbReference>
<dbReference type="Gene3D" id="1.10.220.150">
    <property type="entry name" value="Arf GTPase activating protein"/>
    <property type="match status" value="1"/>
</dbReference>
<dbReference type="Gene3D" id="1.10.8.10">
    <property type="entry name" value="DNA helicase RuvA subunit, C-terminal domain"/>
    <property type="match status" value="1"/>
</dbReference>
<dbReference type="InterPro" id="IPR051718">
    <property type="entry name" value="ARF_GTPase-activating"/>
</dbReference>
<dbReference type="InterPro" id="IPR037278">
    <property type="entry name" value="ARFGAP/RecO"/>
</dbReference>
<dbReference type="InterPro" id="IPR001164">
    <property type="entry name" value="ArfGAP_dom"/>
</dbReference>
<dbReference type="InterPro" id="IPR038508">
    <property type="entry name" value="ArfGAP_dom_sf"/>
</dbReference>
<dbReference type="InterPro" id="IPR015940">
    <property type="entry name" value="UBA"/>
</dbReference>
<dbReference type="InterPro" id="IPR009060">
    <property type="entry name" value="UBA-like_sf"/>
</dbReference>
<dbReference type="PANTHER" id="PTHR45705">
    <property type="entry name" value="FI20236P1"/>
    <property type="match status" value="1"/>
</dbReference>
<dbReference type="PANTHER" id="PTHR45705:SF12">
    <property type="entry name" value="UBA DOMAIN-CONTAINING PROTEIN 3"/>
    <property type="match status" value="1"/>
</dbReference>
<dbReference type="Pfam" id="PF01412">
    <property type="entry name" value="ArfGap"/>
    <property type="match status" value="1"/>
</dbReference>
<dbReference type="PRINTS" id="PR00405">
    <property type="entry name" value="REVINTRACTNG"/>
</dbReference>
<dbReference type="SMART" id="SM00105">
    <property type="entry name" value="ArfGap"/>
    <property type="match status" value="1"/>
</dbReference>
<dbReference type="SMART" id="SM00165">
    <property type="entry name" value="UBA"/>
    <property type="match status" value="1"/>
</dbReference>
<dbReference type="SUPFAM" id="SSF57863">
    <property type="entry name" value="ArfGap/RecO-like zinc finger"/>
    <property type="match status" value="1"/>
</dbReference>
<dbReference type="SUPFAM" id="SSF46934">
    <property type="entry name" value="UBA-like"/>
    <property type="match status" value="1"/>
</dbReference>
<dbReference type="PROSITE" id="PS50115">
    <property type="entry name" value="ARFGAP"/>
    <property type="match status" value="1"/>
</dbReference>
<dbReference type="PROSITE" id="PS50030">
    <property type="entry name" value="UBA"/>
    <property type="match status" value="1"/>
</dbReference>